<keyword id="KW-0165">Cleavage on pair of basic residues</keyword>
<keyword id="KW-1015">Disulfide bond</keyword>
<keyword id="KW-0528">Neurotoxin</keyword>
<keyword id="KW-0873">Pyrrolidone carboxylic acid</keyword>
<keyword id="KW-0964">Secreted</keyword>
<keyword id="KW-0732">Signal</keyword>
<keyword id="KW-0800">Toxin</keyword>
<accession>P0DKQ2</accession>
<accession>S6CQB9</accession>
<feature type="signal peptide" evidence="2">
    <location>
        <begin position="1"/>
        <end position="19"/>
    </location>
</feature>
<feature type="propeptide" id="PRO_0000419881" evidence="6">
    <location>
        <begin position="20"/>
        <end position="48"/>
    </location>
</feature>
<feature type="peptide" id="PRO_0000419882" description="Conotoxin CnIIIG" evidence="3">
    <location>
        <begin position="51"/>
        <end position="73"/>
    </location>
</feature>
<feature type="modified residue" description="Pyrrolidone carboxylic acid" evidence="3">
    <location>
        <position position="51"/>
    </location>
</feature>
<feature type="disulfide bond" evidence="1">
    <location>
        <begin position="53"/>
        <end position="72"/>
    </location>
</feature>
<feature type="disulfide bond" evidence="1">
    <location>
        <begin position="54"/>
        <end position="70"/>
    </location>
</feature>
<feature type="disulfide bond" evidence="1">
    <location>
        <begin position="60"/>
        <end position="73"/>
    </location>
</feature>
<name>CM3G_CONCN</name>
<reference key="1">
    <citation type="journal article" date="2012" name="J. Proteomics">
        <title>Large-scale discovery of conopeptides and conoproteins in the injectable venom of a fish-hunting cone snail using a combined proteomic and transcriptomic approach.</title>
        <authorList>
            <person name="Violette A."/>
            <person name="Biass D."/>
            <person name="Dutertre S."/>
            <person name="Koua D."/>
            <person name="Piquemal D."/>
            <person name="Pierrat F."/>
            <person name="Stocklin R."/>
            <person name="Favreau P."/>
        </authorList>
    </citation>
    <scope>NUCLEOTIDE SEQUENCE [MRNA]</scope>
    <scope>FUNCTION</scope>
    <scope>MASS SPECTROMETRY</scope>
    <scope>PYROGLUTAMATE FORMATION AT GLN-51</scope>
    <scope>IDENTIFICATION BY MASS SPECTROMETRY</scope>
    <scope>SUBCELLULAR LOCATION</scope>
    <source>
        <tissue>Venom</tissue>
        <tissue>Venom duct</tissue>
    </source>
</reference>
<organism>
    <name type="scientific">Conus consors</name>
    <name type="common">Singed cone</name>
    <dbReference type="NCBI Taxonomy" id="101297"/>
    <lineage>
        <taxon>Eukaryota</taxon>
        <taxon>Metazoa</taxon>
        <taxon>Spiralia</taxon>
        <taxon>Lophotrochozoa</taxon>
        <taxon>Mollusca</taxon>
        <taxon>Gastropoda</taxon>
        <taxon>Caenogastropoda</taxon>
        <taxon>Neogastropoda</taxon>
        <taxon>Conoidea</taxon>
        <taxon>Conidae</taxon>
        <taxon>Conus</taxon>
        <taxon>Pionoconus</taxon>
    </lineage>
</organism>
<proteinExistence type="evidence at protein level"/>
<dbReference type="EMBL" id="HE856380">
    <property type="protein sequence ID" value="CCI55493.1"/>
    <property type="molecule type" value="mRNA"/>
</dbReference>
<dbReference type="GO" id="GO:0005576">
    <property type="term" value="C:extracellular region"/>
    <property type="evidence" value="ECO:0007669"/>
    <property type="project" value="UniProtKB-SubCell"/>
</dbReference>
<dbReference type="GO" id="GO:0008200">
    <property type="term" value="F:ion channel inhibitor activity"/>
    <property type="evidence" value="ECO:0007669"/>
    <property type="project" value="InterPro"/>
</dbReference>
<dbReference type="GO" id="GO:0090729">
    <property type="term" value="F:toxin activity"/>
    <property type="evidence" value="ECO:0007669"/>
    <property type="project" value="UniProtKB-KW"/>
</dbReference>
<dbReference type="InterPro" id="IPR004214">
    <property type="entry name" value="Conotoxin"/>
</dbReference>
<dbReference type="Pfam" id="PF02950">
    <property type="entry name" value="Conotoxin"/>
    <property type="match status" value="1"/>
</dbReference>
<evidence type="ECO:0000250" key="1">
    <source>
        <dbReference type="UniProtKB" id="Q5EHP3"/>
    </source>
</evidence>
<evidence type="ECO:0000255" key="2"/>
<evidence type="ECO:0000269" key="3">
    <source>
    </source>
</evidence>
<evidence type="ECO:0000303" key="4">
    <source>
    </source>
</evidence>
<evidence type="ECO:0000305" key="5"/>
<evidence type="ECO:0000305" key="6">
    <source>
    </source>
</evidence>
<comment type="function">
    <text evidence="3">Shows a paralytic effect in fish.</text>
</comment>
<comment type="subcellular location">
    <subcellularLocation>
        <location evidence="3">Secreted</location>
    </subcellularLocation>
</comment>
<comment type="tissue specificity">
    <text evidence="6">Expressed by the venom duct.</text>
</comment>
<comment type="domain">
    <text evidence="5">The cysteine framework is III (CC-C-C-CC). Classified in the M-1 branch, since 1 residue stands between the fourth and the fifth cysteine residues.</text>
</comment>
<comment type="mass spectrometry" mass="2609.04" method="Electrospray" evidence="3"/>
<comment type="miscellaneous">
    <text evidence="6">Found in injectable (milked) (IV) venom.</text>
</comment>
<comment type="miscellaneous">
    <text evidence="6">Surprisingly, the propeptide sequence 20-48 has been identified in the venom. It is unknown whether it is a by-product of incomplete enzymatic degradation of the precursor, or if it has a biological function on its own (PubMed:22705119).</text>
</comment>
<comment type="similarity">
    <text evidence="5">Belongs to the conotoxin M superfamily.</text>
</comment>
<sequence length="73" mass="8263">MSKLGVLLTICLLLLPLTALPMDEDQPADQPADRMQDDISSEQYPLFDKRQKCCGKGMTCPRYFRDNFICGCC</sequence>
<protein>
    <recommendedName>
        <fullName evidence="4">Conotoxin CnIIIG</fullName>
    </recommendedName>
</protein>